<gene>
    <name evidence="1" type="primary">lutA</name>
    <name type="ordered locus">BT9727_1194</name>
</gene>
<protein>
    <recommendedName>
        <fullName evidence="1">Lactate utilization protein A</fullName>
    </recommendedName>
</protein>
<reference key="1">
    <citation type="journal article" date="2006" name="J. Bacteriol.">
        <title>Pathogenomic sequence analysis of Bacillus cereus and Bacillus thuringiensis isolates closely related to Bacillus anthracis.</title>
        <authorList>
            <person name="Han C.S."/>
            <person name="Xie G."/>
            <person name="Challacombe J.F."/>
            <person name="Altherr M.R."/>
            <person name="Bhotika S.S."/>
            <person name="Bruce D."/>
            <person name="Campbell C.S."/>
            <person name="Campbell M.L."/>
            <person name="Chen J."/>
            <person name="Chertkov O."/>
            <person name="Cleland C."/>
            <person name="Dimitrijevic M."/>
            <person name="Doggett N.A."/>
            <person name="Fawcett J.J."/>
            <person name="Glavina T."/>
            <person name="Goodwin L.A."/>
            <person name="Hill K.K."/>
            <person name="Hitchcock P."/>
            <person name="Jackson P.J."/>
            <person name="Keim P."/>
            <person name="Kewalramani A.R."/>
            <person name="Longmire J."/>
            <person name="Lucas S."/>
            <person name="Malfatti S."/>
            <person name="McMurry K."/>
            <person name="Meincke L.J."/>
            <person name="Misra M."/>
            <person name="Moseman B.L."/>
            <person name="Mundt M."/>
            <person name="Munk A.C."/>
            <person name="Okinaka R.T."/>
            <person name="Parson-Quintana B."/>
            <person name="Reilly L.P."/>
            <person name="Richardson P."/>
            <person name="Robinson D.L."/>
            <person name="Rubin E."/>
            <person name="Saunders E."/>
            <person name="Tapia R."/>
            <person name="Tesmer J.G."/>
            <person name="Thayer N."/>
            <person name="Thompson L.S."/>
            <person name="Tice H."/>
            <person name="Ticknor L.O."/>
            <person name="Wills P.L."/>
            <person name="Brettin T.S."/>
            <person name="Gilna P."/>
        </authorList>
    </citation>
    <scope>NUCLEOTIDE SEQUENCE [LARGE SCALE GENOMIC DNA]</scope>
    <source>
        <strain>97-27</strain>
    </source>
</reference>
<comment type="function">
    <text evidence="1">Is involved in L-lactate degradation and allows cells to grow with lactate as the sole carbon source.</text>
</comment>
<comment type="similarity">
    <text evidence="1">Belongs to the LutA/YkgE family.</text>
</comment>
<evidence type="ECO:0000255" key="1">
    <source>
        <dbReference type="HAMAP-Rule" id="MF_02105"/>
    </source>
</evidence>
<name>LUTA_BACHK</name>
<organism>
    <name type="scientific">Bacillus thuringiensis subsp. konkukian (strain 97-27)</name>
    <dbReference type="NCBI Taxonomy" id="281309"/>
    <lineage>
        <taxon>Bacteria</taxon>
        <taxon>Bacillati</taxon>
        <taxon>Bacillota</taxon>
        <taxon>Bacilli</taxon>
        <taxon>Bacillales</taxon>
        <taxon>Bacillaceae</taxon>
        <taxon>Bacillus</taxon>
        <taxon>Bacillus cereus group</taxon>
    </lineage>
</organism>
<sequence>MKVTLFVTCLVDMFETNVGKATVEVLERLGCEIEFPEAQVCCGQPAYNSGHVEAAKEAMKHMIETFEDAEYIVTPSGSCATMFHEYPHVFKDDPKWAKRAQKVADKTYEFTQFIVDVLKVTDVGASLPGIATIHKSCHMTRMLGVTEAPGILLSNVKGLTVRELPNVQNCCGFGGTFSVKMTPISEQMVDEKVDSAMETGADYLIGADCGCLLNIGGRIERLGKEIKVMHIAEVLNSRS</sequence>
<proteinExistence type="inferred from homology"/>
<accession>Q6HLP2</accession>
<feature type="chain" id="PRO_0000384040" description="Lactate utilization protein A">
    <location>
        <begin position="1"/>
        <end position="239"/>
    </location>
</feature>
<dbReference type="EMBL" id="AE017355">
    <property type="protein sequence ID" value="AAT61981.1"/>
    <property type="molecule type" value="Genomic_DNA"/>
</dbReference>
<dbReference type="RefSeq" id="WP_000869149.1">
    <property type="nucleotide sequence ID" value="NC_005957.1"/>
</dbReference>
<dbReference type="RefSeq" id="YP_035529.1">
    <property type="nucleotide sequence ID" value="NC_005957.1"/>
</dbReference>
<dbReference type="SMR" id="Q6HLP2"/>
<dbReference type="KEGG" id="btk:BT9727_1194"/>
<dbReference type="PATRIC" id="fig|281309.8.peg.1256"/>
<dbReference type="HOGENOM" id="CLU_023081_1_0_9"/>
<dbReference type="Proteomes" id="UP000001301">
    <property type="component" value="Chromosome"/>
</dbReference>
<dbReference type="GO" id="GO:0005829">
    <property type="term" value="C:cytosol"/>
    <property type="evidence" value="ECO:0007669"/>
    <property type="project" value="TreeGrafter"/>
</dbReference>
<dbReference type="GO" id="GO:0016491">
    <property type="term" value="F:oxidoreductase activity"/>
    <property type="evidence" value="ECO:0007669"/>
    <property type="project" value="UniProtKB-ARBA"/>
</dbReference>
<dbReference type="GO" id="GO:0006089">
    <property type="term" value="P:lactate metabolic process"/>
    <property type="evidence" value="ECO:0007669"/>
    <property type="project" value="UniProtKB-UniRule"/>
</dbReference>
<dbReference type="HAMAP" id="MF_02105">
    <property type="entry name" value="LutA"/>
    <property type="match status" value="1"/>
</dbReference>
<dbReference type="InterPro" id="IPR004017">
    <property type="entry name" value="Cys_rich_dom"/>
</dbReference>
<dbReference type="InterPro" id="IPR022822">
    <property type="entry name" value="LutA"/>
</dbReference>
<dbReference type="PANTHER" id="PTHR30296:SF0">
    <property type="entry name" value="LACTATE UTILIZATION PROTEIN A"/>
    <property type="match status" value="1"/>
</dbReference>
<dbReference type="PANTHER" id="PTHR30296">
    <property type="entry name" value="UNCHARACTERIZED PROTEIN YKGE"/>
    <property type="match status" value="1"/>
</dbReference>
<dbReference type="Pfam" id="PF02754">
    <property type="entry name" value="CCG"/>
    <property type="match status" value="2"/>
</dbReference>